<gene>
    <name type="primary">fliP</name>
    <name type="ordered locus">Z3038</name>
    <name type="ordered locus">ECs2687</name>
</gene>
<dbReference type="EMBL" id="AE005174">
    <property type="protein sequence ID" value="AAG56963.1"/>
    <property type="molecule type" value="Genomic_DNA"/>
</dbReference>
<dbReference type="EMBL" id="BA000007">
    <property type="protein sequence ID" value="BAB36110.1"/>
    <property type="molecule type" value="Genomic_DNA"/>
</dbReference>
<dbReference type="PIR" id="G85812">
    <property type="entry name" value="G85812"/>
</dbReference>
<dbReference type="PIR" id="G90964">
    <property type="entry name" value="G90964"/>
</dbReference>
<dbReference type="RefSeq" id="NP_310714.1">
    <property type="nucleotide sequence ID" value="NC_002695.1"/>
</dbReference>
<dbReference type="RefSeq" id="WP_001253441.1">
    <property type="nucleotide sequence ID" value="NZ_VOAI01000028.1"/>
</dbReference>
<dbReference type="SMR" id="P0AC06"/>
<dbReference type="STRING" id="155864.Z3038"/>
<dbReference type="GeneID" id="75172067"/>
<dbReference type="GeneID" id="913785"/>
<dbReference type="KEGG" id="ece:Z3038"/>
<dbReference type="KEGG" id="ecs:ECs_2687"/>
<dbReference type="PATRIC" id="fig|386585.9.peg.2815"/>
<dbReference type="eggNOG" id="COG1338">
    <property type="taxonomic scope" value="Bacteria"/>
</dbReference>
<dbReference type="HOGENOM" id="CLU_042028_0_1_6"/>
<dbReference type="OMA" id="MMMLPPI"/>
<dbReference type="Proteomes" id="UP000000558">
    <property type="component" value="Chromosome"/>
</dbReference>
<dbReference type="Proteomes" id="UP000002519">
    <property type="component" value="Chromosome"/>
</dbReference>
<dbReference type="GO" id="GO:0009425">
    <property type="term" value="C:bacterial-type flagellum basal body"/>
    <property type="evidence" value="ECO:0007669"/>
    <property type="project" value="UniProtKB-SubCell"/>
</dbReference>
<dbReference type="GO" id="GO:0005886">
    <property type="term" value="C:plasma membrane"/>
    <property type="evidence" value="ECO:0007669"/>
    <property type="project" value="UniProtKB-SubCell"/>
</dbReference>
<dbReference type="GO" id="GO:0044781">
    <property type="term" value="P:bacterial-type flagellum organization"/>
    <property type="evidence" value="ECO:0007669"/>
    <property type="project" value="UniProtKB-KW"/>
</dbReference>
<dbReference type="GO" id="GO:0009306">
    <property type="term" value="P:protein secretion"/>
    <property type="evidence" value="ECO:0007669"/>
    <property type="project" value="InterPro"/>
</dbReference>
<dbReference type="InterPro" id="IPR005837">
    <property type="entry name" value="FliP"/>
</dbReference>
<dbReference type="InterPro" id="IPR005838">
    <property type="entry name" value="T3SS_IM_P"/>
</dbReference>
<dbReference type="NCBIfam" id="TIGR01103">
    <property type="entry name" value="fliP"/>
    <property type="match status" value="1"/>
</dbReference>
<dbReference type="NCBIfam" id="NF009438">
    <property type="entry name" value="PRK12797.1"/>
    <property type="match status" value="1"/>
</dbReference>
<dbReference type="PANTHER" id="PTHR30587">
    <property type="entry name" value="FLAGELLAR BIOSYNTHETIC PROTEIN FLIP"/>
    <property type="match status" value="1"/>
</dbReference>
<dbReference type="PANTHER" id="PTHR30587:SF0">
    <property type="entry name" value="FLAGELLAR BIOSYNTHETIC PROTEIN FLIP"/>
    <property type="match status" value="1"/>
</dbReference>
<dbReference type="Pfam" id="PF00813">
    <property type="entry name" value="FliP"/>
    <property type="match status" value="1"/>
</dbReference>
<dbReference type="PRINTS" id="PR00951">
    <property type="entry name" value="FLGBIOSNFLIP"/>
</dbReference>
<dbReference type="PRINTS" id="PR01302">
    <property type="entry name" value="TYPE3IMPPROT"/>
</dbReference>
<dbReference type="PROSITE" id="PS01060">
    <property type="entry name" value="FLIP_1"/>
    <property type="match status" value="1"/>
</dbReference>
<dbReference type="PROSITE" id="PS01061">
    <property type="entry name" value="FLIP_2"/>
    <property type="match status" value="1"/>
</dbReference>
<reference key="1">
    <citation type="journal article" date="2001" name="Nature">
        <title>Genome sequence of enterohaemorrhagic Escherichia coli O157:H7.</title>
        <authorList>
            <person name="Perna N.T."/>
            <person name="Plunkett G. III"/>
            <person name="Burland V."/>
            <person name="Mau B."/>
            <person name="Glasner J.D."/>
            <person name="Rose D.J."/>
            <person name="Mayhew G.F."/>
            <person name="Evans P.S."/>
            <person name="Gregor J."/>
            <person name="Kirkpatrick H.A."/>
            <person name="Posfai G."/>
            <person name="Hackett J."/>
            <person name="Klink S."/>
            <person name="Boutin A."/>
            <person name="Shao Y."/>
            <person name="Miller L."/>
            <person name="Grotbeck E.J."/>
            <person name="Davis N.W."/>
            <person name="Lim A."/>
            <person name="Dimalanta E.T."/>
            <person name="Potamousis K."/>
            <person name="Apodaca J."/>
            <person name="Anantharaman T.S."/>
            <person name="Lin J."/>
            <person name="Yen G."/>
            <person name="Schwartz D.C."/>
            <person name="Welch R.A."/>
            <person name="Blattner F.R."/>
        </authorList>
    </citation>
    <scope>NUCLEOTIDE SEQUENCE [LARGE SCALE GENOMIC DNA]</scope>
    <source>
        <strain>O157:H7 / EDL933 / ATCC 700927 / EHEC</strain>
    </source>
</reference>
<reference key="2">
    <citation type="journal article" date="2001" name="DNA Res.">
        <title>Complete genome sequence of enterohemorrhagic Escherichia coli O157:H7 and genomic comparison with a laboratory strain K-12.</title>
        <authorList>
            <person name="Hayashi T."/>
            <person name="Makino K."/>
            <person name="Ohnishi M."/>
            <person name="Kurokawa K."/>
            <person name="Ishii K."/>
            <person name="Yokoyama K."/>
            <person name="Han C.-G."/>
            <person name="Ohtsubo E."/>
            <person name="Nakayama K."/>
            <person name="Murata T."/>
            <person name="Tanaka M."/>
            <person name="Tobe T."/>
            <person name="Iida T."/>
            <person name="Takami H."/>
            <person name="Honda T."/>
            <person name="Sasakawa C."/>
            <person name="Ogasawara N."/>
            <person name="Yasunaga T."/>
            <person name="Kuhara S."/>
            <person name="Shiba T."/>
            <person name="Hattori M."/>
            <person name="Shinagawa H."/>
        </authorList>
    </citation>
    <scope>NUCLEOTIDE SEQUENCE [LARGE SCALE GENOMIC DNA]</scope>
    <source>
        <strain>O157:H7 / Sakai / RIMD 0509952 / EHEC</strain>
    </source>
</reference>
<accession>P0AC06</accession>
<accession>P33133</accession>
<comment type="function">
    <text evidence="1">Plays a role in the flagellum-specific transport system.</text>
</comment>
<comment type="subcellular location">
    <subcellularLocation>
        <location evidence="1">Cell inner membrane</location>
        <topology evidence="1">Multi-pass membrane protein</topology>
    </subcellularLocation>
    <subcellularLocation>
        <location evidence="1">Bacterial flagellum basal body</location>
    </subcellularLocation>
</comment>
<comment type="similarity">
    <text evidence="3">Belongs to the FliP/MopC/SpaP family.</text>
</comment>
<keyword id="KW-0975">Bacterial flagellum</keyword>
<keyword id="KW-1005">Bacterial flagellum biogenesis</keyword>
<keyword id="KW-1006">Bacterial flagellum protein export</keyword>
<keyword id="KW-0997">Cell inner membrane</keyword>
<keyword id="KW-1003">Cell membrane</keyword>
<keyword id="KW-0472">Membrane</keyword>
<keyword id="KW-0653">Protein transport</keyword>
<keyword id="KW-1185">Reference proteome</keyword>
<keyword id="KW-0732">Signal</keyword>
<keyword id="KW-0812">Transmembrane</keyword>
<keyword id="KW-1133">Transmembrane helix</keyword>
<keyword id="KW-0813">Transport</keyword>
<name>FLIP_ECO57</name>
<proteinExistence type="inferred from homology"/>
<sequence length="245" mass="26928">MRRLLSVAPVLLWLITPLAFAQLPGITSQPLPGGGQSWSLPVQTLVFITSLTFIPAILLMMTSFTRIIIVFGLLRNALGTPSAPPNQVLLGLALFLTFFIMSPVIDKIYVDAYQPFSEEKISMQEALEKGAQPLREFMLRQTREADLGLFARLANTGPLQGPEAVPMRILLPAYVTSELKTAFQIGFTIFIPFLIIDLVIASVLMALGMMMVPPATIALPFKLMLFVLVDGWQLLVGSLAQSFYS</sequence>
<organism>
    <name type="scientific">Escherichia coli O157:H7</name>
    <dbReference type="NCBI Taxonomy" id="83334"/>
    <lineage>
        <taxon>Bacteria</taxon>
        <taxon>Pseudomonadati</taxon>
        <taxon>Pseudomonadota</taxon>
        <taxon>Gammaproteobacteria</taxon>
        <taxon>Enterobacterales</taxon>
        <taxon>Enterobacteriaceae</taxon>
        <taxon>Escherichia</taxon>
    </lineage>
</organism>
<protein>
    <recommendedName>
        <fullName>Flagellar biosynthetic protein FliP</fullName>
    </recommendedName>
</protein>
<evidence type="ECO:0000250" key="1"/>
<evidence type="ECO:0000255" key="2"/>
<evidence type="ECO:0000305" key="3"/>
<feature type="signal peptide" evidence="1">
    <location>
        <begin position="1"/>
        <end position="21"/>
    </location>
</feature>
<feature type="chain" id="PRO_0000042805" description="Flagellar biosynthetic protein FliP">
    <location>
        <begin position="22"/>
        <end position="245"/>
    </location>
</feature>
<feature type="transmembrane region" description="Helical" evidence="2">
    <location>
        <begin position="45"/>
        <end position="65"/>
    </location>
</feature>
<feature type="transmembrane region" description="Helical" evidence="2">
    <location>
        <begin position="88"/>
        <end position="108"/>
    </location>
</feature>
<feature type="transmembrane region" description="Helical" evidence="2">
    <location>
        <begin position="185"/>
        <end position="205"/>
    </location>
</feature>
<feature type="transmembrane region" description="Helical" evidence="2">
    <location>
        <begin position="209"/>
        <end position="229"/>
    </location>
</feature>